<gene>
    <name evidence="1" type="primary">rpsO</name>
    <name type="ordered locus">BURPS1710b_1429</name>
</gene>
<keyword id="KW-0687">Ribonucleoprotein</keyword>
<keyword id="KW-0689">Ribosomal protein</keyword>
<keyword id="KW-0694">RNA-binding</keyword>
<keyword id="KW-0699">rRNA-binding</keyword>
<dbReference type="EMBL" id="CP000124">
    <property type="protein sequence ID" value="ABA48507.1"/>
    <property type="status" value="ALT_INIT"/>
    <property type="molecule type" value="Genomic_DNA"/>
</dbReference>
<dbReference type="RefSeq" id="WP_004185828.1">
    <property type="nucleotide sequence ID" value="NC_007434.1"/>
</dbReference>
<dbReference type="SMR" id="Q3JUB4"/>
<dbReference type="EnsemblBacteria" id="ABA48507">
    <property type="protein sequence ID" value="ABA48507"/>
    <property type="gene ID" value="BURPS1710b_1429"/>
</dbReference>
<dbReference type="GeneID" id="93059688"/>
<dbReference type="KEGG" id="bpm:BURPS1710b_1429"/>
<dbReference type="HOGENOM" id="CLU_148518_0_0_4"/>
<dbReference type="Proteomes" id="UP000002700">
    <property type="component" value="Chromosome I"/>
</dbReference>
<dbReference type="GO" id="GO:0022627">
    <property type="term" value="C:cytosolic small ribosomal subunit"/>
    <property type="evidence" value="ECO:0007669"/>
    <property type="project" value="TreeGrafter"/>
</dbReference>
<dbReference type="GO" id="GO:0019843">
    <property type="term" value="F:rRNA binding"/>
    <property type="evidence" value="ECO:0007669"/>
    <property type="project" value="UniProtKB-UniRule"/>
</dbReference>
<dbReference type="GO" id="GO:0003735">
    <property type="term" value="F:structural constituent of ribosome"/>
    <property type="evidence" value="ECO:0007669"/>
    <property type="project" value="InterPro"/>
</dbReference>
<dbReference type="GO" id="GO:0006412">
    <property type="term" value="P:translation"/>
    <property type="evidence" value="ECO:0007669"/>
    <property type="project" value="UniProtKB-UniRule"/>
</dbReference>
<dbReference type="CDD" id="cd00353">
    <property type="entry name" value="Ribosomal_S15p_S13e"/>
    <property type="match status" value="1"/>
</dbReference>
<dbReference type="FunFam" id="1.10.287.10:FF:000002">
    <property type="entry name" value="30S ribosomal protein S15"/>
    <property type="match status" value="1"/>
</dbReference>
<dbReference type="Gene3D" id="6.10.250.3130">
    <property type="match status" value="1"/>
</dbReference>
<dbReference type="Gene3D" id="1.10.287.10">
    <property type="entry name" value="S15/NS1, RNA-binding"/>
    <property type="match status" value="1"/>
</dbReference>
<dbReference type="HAMAP" id="MF_01343_B">
    <property type="entry name" value="Ribosomal_uS15_B"/>
    <property type="match status" value="1"/>
</dbReference>
<dbReference type="InterPro" id="IPR000589">
    <property type="entry name" value="Ribosomal_uS15"/>
</dbReference>
<dbReference type="InterPro" id="IPR005290">
    <property type="entry name" value="Ribosomal_uS15_bac-type"/>
</dbReference>
<dbReference type="InterPro" id="IPR009068">
    <property type="entry name" value="uS15_NS1_RNA-bd_sf"/>
</dbReference>
<dbReference type="NCBIfam" id="TIGR00952">
    <property type="entry name" value="S15_bact"/>
    <property type="match status" value="1"/>
</dbReference>
<dbReference type="PANTHER" id="PTHR23321">
    <property type="entry name" value="RIBOSOMAL PROTEIN S15, BACTERIAL AND ORGANELLAR"/>
    <property type="match status" value="1"/>
</dbReference>
<dbReference type="PANTHER" id="PTHR23321:SF26">
    <property type="entry name" value="SMALL RIBOSOMAL SUBUNIT PROTEIN US15M"/>
    <property type="match status" value="1"/>
</dbReference>
<dbReference type="Pfam" id="PF00312">
    <property type="entry name" value="Ribosomal_S15"/>
    <property type="match status" value="1"/>
</dbReference>
<dbReference type="SMART" id="SM01387">
    <property type="entry name" value="Ribosomal_S15"/>
    <property type="match status" value="1"/>
</dbReference>
<dbReference type="SUPFAM" id="SSF47060">
    <property type="entry name" value="S15/NS1 RNA-binding domain"/>
    <property type="match status" value="1"/>
</dbReference>
<dbReference type="PROSITE" id="PS00362">
    <property type="entry name" value="RIBOSOMAL_S15"/>
    <property type="match status" value="1"/>
</dbReference>
<accession>Q3JUB4</accession>
<sequence length="89" mass="10098">MSVADIKKSEVVAQFARGANDTGSPEVQVALLTARITELTGHFKTHAKDHHSRRGLLRMVSRRRKLLDYLKGKDADRYRALIEKLGLRK</sequence>
<protein>
    <recommendedName>
        <fullName evidence="1">Small ribosomal subunit protein uS15</fullName>
    </recommendedName>
    <alternativeName>
        <fullName evidence="2">30S ribosomal protein S15</fullName>
    </alternativeName>
</protein>
<organism>
    <name type="scientific">Burkholderia pseudomallei (strain 1710b)</name>
    <dbReference type="NCBI Taxonomy" id="320372"/>
    <lineage>
        <taxon>Bacteria</taxon>
        <taxon>Pseudomonadati</taxon>
        <taxon>Pseudomonadota</taxon>
        <taxon>Betaproteobacteria</taxon>
        <taxon>Burkholderiales</taxon>
        <taxon>Burkholderiaceae</taxon>
        <taxon>Burkholderia</taxon>
        <taxon>pseudomallei group</taxon>
    </lineage>
</organism>
<name>RS15_BURP1</name>
<feature type="chain" id="PRO_0000255481" description="Small ribosomal subunit protein uS15">
    <location>
        <begin position="1"/>
        <end position="89"/>
    </location>
</feature>
<evidence type="ECO:0000255" key="1">
    <source>
        <dbReference type="HAMAP-Rule" id="MF_01343"/>
    </source>
</evidence>
<evidence type="ECO:0000305" key="2"/>
<reference key="1">
    <citation type="journal article" date="2010" name="Genome Biol. Evol.">
        <title>Continuing evolution of Burkholderia mallei through genome reduction and large-scale rearrangements.</title>
        <authorList>
            <person name="Losada L."/>
            <person name="Ronning C.M."/>
            <person name="DeShazer D."/>
            <person name="Woods D."/>
            <person name="Fedorova N."/>
            <person name="Kim H.S."/>
            <person name="Shabalina S.A."/>
            <person name="Pearson T.R."/>
            <person name="Brinkac L."/>
            <person name="Tan P."/>
            <person name="Nandi T."/>
            <person name="Crabtree J."/>
            <person name="Badger J."/>
            <person name="Beckstrom-Sternberg S."/>
            <person name="Saqib M."/>
            <person name="Schutzer S.E."/>
            <person name="Keim P."/>
            <person name="Nierman W.C."/>
        </authorList>
    </citation>
    <scope>NUCLEOTIDE SEQUENCE [LARGE SCALE GENOMIC DNA]</scope>
    <source>
        <strain>1710b</strain>
    </source>
</reference>
<proteinExistence type="inferred from homology"/>
<comment type="function">
    <text evidence="1">One of the primary rRNA binding proteins, it binds directly to 16S rRNA where it helps nucleate assembly of the platform of the 30S subunit by binding and bridging several RNA helices of the 16S rRNA.</text>
</comment>
<comment type="function">
    <text evidence="1">Forms an intersubunit bridge (bridge B4) with the 23S rRNA of the 50S subunit in the ribosome.</text>
</comment>
<comment type="subunit">
    <text evidence="1">Part of the 30S ribosomal subunit. Forms a bridge to the 50S subunit in the 70S ribosome, contacting the 23S rRNA.</text>
</comment>
<comment type="similarity">
    <text evidence="1">Belongs to the universal ribosomal protein uS15 family.</text>
</comment>
<comment type="sequence caution" evidence="2">
    <conflict type="erroneous initiation">
        <sequence resource="EMBL-CDS" id="ABA48507"/>
    </conflict>
</comment>